<gene>
    <name type="ordered locus">Rv0090</name>
    <name type="ORF">MTCY251.08</name>
</gene>
<name>Y090_MYCTU</name>
<accession>P9WM71</accession>
<accession>L0T2K3</accession>
<accession>P64683</accession>
<accession>Q10887</accession>
<dbReference type="EMBL" id="AL123456">
    <property type="protein sequence ID" value="CCP42815.1"/>
    <property type="molecule type" value="Genomic_DNA"/>
</dbReference>
<dbReference type="PIR" id="B70750">
    <property type="entry name" value="B70750"/>
</dbReference>
<dbReference type="RefSeq" id="NP_214604.1">
    <property type="nucleotide sequence ID" value="NC_000962.3"/>
</dbReference>
<dbReference type="RefSeq" id="WP_003899807.1">
    <property type="nucleotide sequence ID" value="NZ_NVQJ01000005.1"/>
</dbReference>
<dbReference type="STRING" id="83332.Rv0090"/>
<dbReference type="PaxDb" id="83332-Rv0090"/>
<dbReference type="DNASU" id="886961"/>
<dbReference type="GeneID" id="886961"/>
<dbReference type="KEGG" id="mtu:Rv0090"/>
<dbReference type="KEGG" id="mtv:RVBD_0090"/>
<dbReference type="TubercuList" id="Rv0090"/>
<dbReference type="eggNOG" id="COG3305">
    <property type="taxonomic scope" value="Bacteria"/>
</dbReference>
<dbReference type="InParanoid" id="P9WM71"/>
<dbReference type="OrthoDB" id="572497at2"/>
<dbReference type="Proteomes" id="UP000001584">
    <property type="component" value="Chromosome"/>
</dbReference>
<dbReference type="GO" id="GO:0005886">
    <property type="term" value="C:plasma membrane"/>
    <property type="evidence" value="ECO:0007669"/>
    <property type="project" value="UniProtKB-SubCell"/>
</dbReference>
<dbReference type="InterPro" id="IPR014511">
    <property type="entry name" value="DUF2068_TM_subgr"/>
</dbReference>
<dbReference type="InterPro" id="IPR021125">
    <property type="entry name" value="DUF2127"/>
</dbReference>
<dbReference type="Pfam" id="PF09900">
    <property type="entry name" value="DUF2127"/>
    <property type="match status" value="1"/>
</dbReference>
<dbReference type="PIRSF" id="PIRSF021485">
    <property type="entry name" value="UCP021485"/>
    <property type="match status" value="1"/>
</dbReference>
<evidence type="ECO:0000255" key="1"/>
<evidence type="ECO:0000305" key="2"/>
<comment type="subcellular location">
    <subcellularLocation>
        <location evidence="2">Cell membrane</location>
        <topology evidence="2">Multi-pass membrane protein</topology>
    </subcellularLocation>
</comment>
<protein>
    <recommendedName>
        <fullName>Uncharacterized protein Rv0090</fullName>
    </recommendedName>
</protein>
<reference key="1">
    <citation type="journal article" date="1998" name="Nature">
        <title>Deciphering the biology of Mycobacterium tuberculosis from the complete genome sequence.</title>
        <authorList>
            <person name="Cole S.T."/>
            <person name="Brosch R."/>
            <person name="Parkhill J."/>
            <person name="Garnier T."/>
            <person name="Churcher C.M."/>
            <person name="Harris D.E."/>
            <person name="Gordon S.V."/>
            <person name="Eiglmeier K."/>
            <person name="Gas S."/>
            <person name="Barry C.E. III"/>
            <person name="Tekaia F."/>
            <person name="Badcock K."/>
            <person name="Basham D."/>
            <person name="Brown D."/>
            <person name="Chillingworth T."/>
            <person name="Connor R."/>
            <person name="Davies R.M."/>
            <person name="Devlin K."/>
            <person name="Feltwell T."/>
            <person name="Gentles S."/>
            <person name="Hamlin N."/>
            <person name="Holroyd S."/>
            <person name="Hornsby T."/>
            <person name="Jagels K."/>
            <person name="Krogh A."/>
            <person name="McLean J."/>
            <person name="Moule S."/>
            <person name="Murphy L.D."/>
            <person name="Oliver S."/>
            <person name="Osborne J."/>
            <person name="Quail M.A."/>
            <person name="Rajandream M.A."/>
            <person name="Rogers J."/>
            <person name="Rutter S."/>
            <person name="Seeger K."/>
            <person name="Skelton S."/>
            <person name="Squares S."/>
            <person name="Squares R."/>
            <person name="Sulston J.E."/>
            <person name="Taylor K."/>
            <person name="Whitehead S."/>
            <person name="Barrell B.G."/>
        </authorList>
    </citation>
    <scope>NUCLEOTIDE SEQUENCE [LARGE SCALE GENOMIC DNA]</scope>
    <source>
        <strain>ATCC 25618 / H37Rv</strain>
    </source>
</reference>
<reference key="2">
    <citation type="journal article" date="2011" name="Mol. Cell. Proteomics">
        <title>Proteogenomic analysis of Mycobacterium tuberculosis by high resolution mass spectrometry.</title>
        <authorList>
            <person name="Kelkar D.S."/>
            <person name="Kumar D."/>
            <person name="Kumar P."/>
            <person name="Balakrishnan L."/>
            <person name="Muthusamy B."/>
            <person name="Yadav A.K."/>
            <person name="Shrivastava P."/>
            <person name="Marimuthu A."/>
            <person name="Anand S."/>
            <person name="Sundaram H."/>
            <person name="Kingsbury R."/>
            <person name="Harsha H.C."/>
            <person name="Nair B."/>
            <person name="Prasad T.S."/>
            <person name="Chauhan D.S."/>
            <person name="Katoch K."/>
            <person name="Katoch V.M."/>
            <person name="Kumar P."/>
            <person name="Chaerkady R."/>
            <person name="Ramachandran S."/>
            <person name="Dash D."/>
            <person name="Pandey A."/>
        </authorList>
    </citation>
    <scope>IDENTIFICATION BY MASS SPECTROMETRY [LARGE SCALE ANALYSIS]</scope>
    <source>
        <strain>ATCC 25618 / H37Rv</strain>
    </source>
</reference>
<sequence length="256" mass="27838">MAKNQNRIRNRWELITCGLGGHVTYAPDDAALAARLRASTGLGEVWRCLRCGDFALGGPQGRGAPEDAPLIMRGKALRQAIIIRALGVERLVRALVLALAAWAVWEFRGARGAIQATLDRDLPVLRAAGFKVDQMTVIHALEKALAAKPSTLALITGMLAAYAVLQAVEGVGLWLLKRWGEYFAVVATSIFLPLEVHDLAKGITTTRVVTFSINVAAVVYLLISKRLFGVRGGRKAYDVERRGEQLLDLERAAMLT</sequence>
<keyword id="KW-1003">Cell membrane</keyword>
<keyword id="KW-0472">Membrane</keyword>
<keyword id="KW-1185">Reference proteome</keyword>
<keyword id="KW-0812">Transmembrane</keyword>
<keyword id="KW-1133">Transmembrane helix</keyword>
<feature type="chain" id="PRO_0000103664" description="Uncharacterized protein Rv0090">
    <location>
        <begin position="1"/>
        <end position="256"/>
    </location>
</feature>
<feature type="transmembrane region" description="Helical" evidence="1">
    <location>
        <begin position="155"/>
        <end position="175"/>
    </location>
</feature>
<feature type="transmembrane region" description="Helical" evidence="1">
    <location>
        <begin position="203"/>
        <end position="223"/>
    </location>
</feature>
<proteinExistence type="evidence at protein level"/>
<organism>
    <name type="scientific">Mycobacterium tuberculosis (strain ATCC 25618 / H37Rv)</name>
    <dbReference type="NCBI Taxonomy" id="83332"/>
    <lineage>
        <taxon>Bacteria</taxon>
        <taxon>Bacillati</taxon>
        <taxon>Actinomycetota</taxon>
        <taxon>Actinomycetes</taxon>
        <taxon>Mycobacteriales</taxon>
        <taxon>Mycobacteriaceae</taxon>
        <taxon>Mycobacterium</taxon>
        <taxon>Mycobacterium tuberculosis complex</taxon>
    </lineage>
</organism>